<comment type="cofactor">
    <cofactor evidence="1">
        <name>Zn(2+)</name>
        <dbReference type="ChEBI" id="CHEBI:29105"/>
    </cofactor>
    <text evidence="1">Binds 1 zinc ion per subunit.</text>
</comment>
<comment type="subcellular location">
    <subcellularLocation>
        <location evidence="1">Cell inner membrane</location>
        <topology evidence="1">Multi-pass membrane protein</topology>
    </subcellularLocation>
</comment>
<comment type="similarity">
    <text evidence="1">Belongs to the peptidase M48B family.</text>
</comment>
<proteinExistence type="inferred from homology"/>
<evidence type="ECO:0000255" key="1">
    <source>
        <dbReference type="HAMAP-Rule" id="MF_00188"/>
    </source>
</evidence>
<gene>
    <name evidence="1" type="primary">htpX</name>
    <name type="ordered locus">plu2681</name>
</gene>
<accession>Q7N3N4</accession>
<protein>
    <recommendedName>
        <fullName evidence="1">Protease HtpX</fullName>
        <ecNumber evidence="1">3.4.24.-</ecNumber>
    </recommendedName>
    <alternativeName>
        <fullName evidence="1">Heat shock protein HtpX</fullName>
    </alternativeName>
</protein>
<organism>
    <name type="scientific">Photorhabdus laumondii subsp. laumondii (strain DSM 15139 / CIP 105565 / TT01)</name>
    <name type="common">Photorhabdus luminescens subsp. laumondii</name>
    <dbReference type="NCBI Taxonomy" id="243265"/>
    <lineage>
        <taxon>Bacteria</taxon>
        <taxon>Pseudomonadati</taxon>
        <taxon>Pseudomonadota</taxon>
        <taxon>Gammaproteobacteria</taxon>
        <taxon>Enterobacterales</taxon>
        <taxon>Morganellaceae</taxon>
        <taxon>Photorhabdus</taxon>
    </lineage>
</organism>
<reference key="1">
    <citation type="journal article" date="2003" name="Nat. Biotechnol.">
        <title>The genome sequence of the entomopathogenic bacterium Photorhabdus luminescens.</title>
        <authorList>
            <person name="Duchaud E."/>
            <person name="Rusniok C."/>
            <person name="Frangeul L."/>
            <person name="Buchrieser C."/>
            <person name="Givaudan A."/>
            <person name="Taourit S."/>
            <person name="Bocs S."/>
            <person name="Boursaux-Eude C."/>
            <person name="Chandler M."/>
            <person name="Charles J.-F."/>
            <person name="Dassa E."/>
            <person name="Derose R."/>
            <person name="Derzelle S."/>
            <person name="Freyssinet G."/>
            <person name="Gaudriault S."/>
            <person name="Medigue C."/>
            <person name="Lanois A."/>
            <person name="Powell K."/>
            <person name="Siguier P."/>
            <person name="Vincent R."/>
            <person name="Wingate V."/>
            <person name="Zouine M."/>
            <person name="Glaser P."/>
            <person name="Boemare N."/>
            <person name="Danchin A."/>
            <person name="Kunst F."/>
        </authorList>
    </citation>
    <scope>NUCLEOTIDE SEQUENCE [LARGE SCALE GENOMIC DNA]</scope>
    <source>
        <strain>DSM 15139 / CIP 105565 / TT01</strain>
    </source>
</reference>
<keyword id="KW-0997">Cell inner membrane</keyword>
<keyword id="KW-1003">Cell membrane</keyword>
<keyword id="KW-0378">Hydrolase</keyword>
<keyword id="KW-0472">Membrane</keyword>
<keyword id="KW-0479">Metal-binding</keyword>
<keyword id="KW-0482">Metalloprotease</keyword>
<keyword id="KW-0645">Protease</keyword>
<keyword id="KW-1185">Reference proteome</keyword>
<keyword id="KW-0346">Stress response</keyword>
<keyword id="KW-0812">Transmembrane</keyword>
<keyword id="KW-1133">Transmembrane helix</keyword>
<keyword id="KW-0862">Zinc</keyword>
<sequence>MMRIVLFLLTNLAVMLVFGIILSLTGIQGSSVQGLMIMAGLFGFGGAFVSLLMSKWMALRSVGGQVIEQPANEVEHWLVETVRSQAEQVNIAMPQVAIYAAPDINAFATGARRNASLVAVSSGLLDNMSRAEAEAVIAHEISHIANGDMVTMTLLQGIVNTFVIFISRLLAQAVSSFLSGNSDEEESNSSGNPIVYMVASMVLEIVFGILASIITMWFSRYREFHADAGSAKLVGREKMIAALQRLKTSYEPQEEGGMMAFCINGKSKTFSELFMSHPPLDKRIEALRSGQYLNK</sequence>
<name>HTPX_PHOLL</name>
<dbReference type="EC" id="3.4.24.-" evidence="1"/>
<dbReference type="EMBL" id="BX571868">
    <property type="protein sequence ID" value="CAE15055.1"/>
    <property type="molecule type" value="Genomic_DNA"/>
</dbReference>
<dbReference type="RefSeq" id="WP_011146903.1">
    <property type="nucleotide sequence ID" value="NC_005126.1"/>
</dbReference>
<dbReference type="SMR" id="Q7N3N4"/>
<dbReference type="STRING" id="243265.plu2681"/>
<dbReference type="MEROPS" id="M48.002"/>
<dbReference type="GeneID" id="48848944"/>
<dbReference type="KEGG" id="plu:plu2681"/>
<dbReference type="eggNOG" id="COG0501">
    <property type="taxonomic scope" value="Bacteria"/>
</dbReference>
<dbReference type="HOGENOM" id="CLU_042266_1_0_6"/>
<dbReference type="OrthoDB" id="15218at2"/>
<dbReference type="Proteomes" id="UP000002514">
    <property type="component" value="Chromosome"/>
</dbReference>
<dbReference type="GO" id="GO:0005886">
    <property type="term" value="C:plasma membrane"/>
    <property type="evidence" value="ECO:0007669"/>
    <property type="project" value="UniProtKB-SubCell"/>
</dbReference>
<dbReference type="GO" id="GO:0004222">
    <property type="term" value="F:metalloendopeptidase activity"/>
    <property type="evidence" value="ECO:0007669"/>
    <property type="project" value="UniProtKB-UniRule"/>
</dbReference>
<dbReference type="GO" id="GO:0008270">
    <property type="term" value="F:zinc ion binding"/>
    <property type="evidence" value="ECO:0007669"/>
    <property type="project" value="UniProtKB-UniRule"/>
</dbReference>
<dbReference type="GO" id="GO:0006508">
    <property type="term" value="P:proteolysis"/>
    <property type="evidence" value="ECO:0007669"/>
    <property type="project" value="UniProtKB-KW"/>
</dbReference>
<dbReference type="CDD" id="cd07335">
    <property type="entry name" value="M48B_HtpX_like"/>
    <property type="match status" value="1"/>
</dbReference>
<dbReference type="FunFam" id="3.30.2010.10:FF:000001">
    <property type="entry name" value="Protease HtpX"/>
    <property type="match status" value="1"/>
</dbReference>
<dbReference type="Gene3D" id="3.30.2010.10">
    <property type="entry name" value="Metalloproteases ('zincins'), catalytic domain"/>
    <property type="match status" value="1"/>
</dbReference>
<dbReference type="HAMAP" id="MF_00188">
    <property type="entry name" value="Pept_M48_protease_HtpX"/>
    <property type="match status" value="1"/>
</dbReference>
<dbReference type="InterPro" id="IPR050083">
    <property type="entry name" value="HtpX_protease"/>
</dbReference>
<dbReference type="InterPro" id="IPR022919">
    <property type="entry name" value="Pept_M48_protease_HtpX"/>
</dbReference>
<dbReference type="InterPro" id="IPR001915">
    <property type="entry name" value="Peptidase_M48"/>
</dbReference>
<dbReference type="NCBIfam" id="NF003965">
    <property type="entry name" value="PRK05457.1"/>
    <property type="match status" value="1"/>
</dbReference>
<dbReference type="PANTHER" id="PTHR43221">
    <property type="entry name" value="PROTEASE HTPX"/>
    <property type="match status" value="1"/>
</dbReference>
<dbReference type="PANTHER" id="PTHR43221:SF1">
    <property type="entry name" value="PROTEASE HTPX"/>
    <property type="match status" value="1"/>
</dbReference>
<dbReference type="Pfam" id="PF01435">
    <property type="entry name" value="Peptidase_M48"/>
    <property type="match status" value="1"/>
</dbReference>
<feature type="chain" id="PRO_1000020908" description="Protease HtpX">
    <location>
        <begin position="1"/>
        <end position="295"/>
    </location>
</feature>
<feature type="transmembrane region" description="Helical" evidence="1">
    <location>
        <begin position="4"/>
        <end position="24"/>
    </location>
</feature>
<feature type="transmembrane region" description="Helical" evidence="1">
    <location>
        <begin position="34"/>
        <end position="54"/>
    </location>
</feature>
<feature type="transmembrane region" description="Helical" evidence="1">
    <location>
        <begin position="147"/>
        <end position="167"/>
    </location>
</feature>
<feature type="transmembrane region" description="Helical" evidence="1">
    <location>
        <begin position="194"/>
        <end position="214"/>
    </location>
</feature>
<feature type="active site" evidence="1">
    <location>
        <position position="140"/>
    </location>
</feature>
<feature type="binding site" evidence="1">
    <location>
        <position position="139"/>
    </location>
    <ligand>
        <name>Zn(2+)</name>
        <dbReference type="ChEBI" id="CHEBI:29105"/>
        <note>catalytic</note>
    </ligand>
</feature>
<feature type="binding site" evidence="1">
    <location>
        <position position="143"/>
    </location>
    <ligand>
        <name>Zn(2+)</name>
        <dbReference type="ChEBI" id="CHEBI:29105"/>
        <note>catalytic</note>
    </ligand>
</feature>
<feature type="binding site" evidence="1">
    <location>
        <position position="223"/>
    </location>
    <ligand>
        <name>Zn(2+)</name>
        <dbReference type="ChEBI" id="CHEBI:29105"/>
        <note>catalytic</note>
    </ligand>
</feature>